<name>RL3_PIG</name>
<gene>
    <name type="primary">RPL3</name>
</gene>
<evidence type="ECO:0000250" key="1">
    <source>
        <dbReference type="UniProtKB" id="P27659"/>
    </source>
</evidence>
<evidence type="ECO:0000250" key="2">
    <source>
        <dbReference type="UniProtKB" id="P39023"/>
    </source>
</evidence>
<evidence type="ECO:0000256" key="3">
    <source>
        <dbReference type="SAM" id="MobiDB-lite"/>
    </source>
</evidence>
<evidence type="ECO:0000305" key="4"/>
<organism>
    <name type="scientific">Sus scrofa</name>
    <name type="common">Pig</name>
    <dbReference type="NCBI Taxonomy" id="9823"/>
    <lineage>
        <taxon>Eukaryota</taxon>
        <taxon>Metazoa</taxon>
        <taxon>Chordata</taxon>
        <taxon>Craniata</taxon>
        <taxon>Vertebrata</taxon>
        <taxon>Euteleostomi</taxon>
        <taxon>Mammalia</taxon>
        <taxon>Eutheria</taxon>
        <taxon>Laurasiatheria</taxon>
        <taxon>Artiodactyla</taxon>
        <taxon>Suina</taxon>
        <taxon>Suidae</taxon>
        <taxon>Sus</taxon>
    </lineage>
</organism>
<protein>
    <recommendedName>
        <fullName evidence="4">Large ribosomal subunit protein uL3</fullName>
    </recommendedName>
    <alternativeName>
        <fullName>60S ribosomal protein L3</fullName>
    </alternativeName>
</protein>
<feature type="chain" id="PRO_0000077230" description="Large ribosomal subunit protein uL3">
    <location>
        <begin position="1"/>
        <end position="403"/>
    </location>
</feature>
<feature type="region of interest" description="Disordered" evidence="3">
    <location>
        <begin position="1"/>
        <end position="38"/>
    </location>
</feature>
<feature type="compositionally biased region" description="Basic residues" evidence="3">
    <location>
        <begin position="18"/>
        <end position="31"/>
    </location>
</feature>
<feature type="modified residue" description="Phosphoserine" evidence="2">
    <location>
        <position position="13"/>
    </location>
</feature>
<feature type="modified residue" description="N6-acetyllysine" evidence="1">
    <location>
        <position position="136"/>
    </location>
</feature>
<feature type="modified residue" description="Tele-methylhistidine" evidence="2">
    <location>
        <position position="245"/>
    </location>
</feature>
<feature type="modified residue" description="N6-acetyllysine; alternate" evidence="1">
    <location>
        <position position="286"/>
    </location>
</feature>
<feature type="modified residue" description="N6-acetyllysine; alternate" evidence="2">
    <location>
        <position position="294"/>
    </location>
</feature>
<feature type="modified residue" description="Phosphoserine" evidence="2">
    <location>
        <position position="304"/>
    </location>
</feature>
<feature type="modified residue" description="N6-acetyllysine; alternate" evidence="2">
    <location>
        <position position="366"/>
    </location>
</feature>
<feature type="modified residue" description="N6-acetyllysine" evidence="1">
    <location>
        <position position="373"/>
    </location>
</feature>
<feature type="cross-link" description="Glycyl lysine isopeptide (Lys-Gly) (interchain with G-Cter in SUMO2)" evidence="2">
    <location>
        <position position="39"/>
    </location>
</feature>
<feature type="cross-link" description="Glycyl lysine isopeptide (Lys-Gly) (interchain with G-Cter in SUMO2)" evidence="2">
    <location>
        <position position="224"/>
    </location>
</feature>
<feature type="cross-link" description="Glycyl lysine isopeptide (Lys-Gly) (interchain with G-Cter in SUMO2)" evidence="2">
    <location>
        <position position="226"/>
    </location>
</feature>
<feature type="cross-link" description="Glycyl lysine isopeptide (Lys-Gly) (interchain with G-Cter in SUMO2); alternate" evidence="2">
    <location>
        <position position="286"/>
    </location>
</feature>
<feature type="cross-link" description="Glycyl lysine isopeptide (Lys-Gly) (interchain with G-Cter in SUMO1); alternate" evidence="2">
    <location>
        <position position="294"/>
    </location>
</feature>
<feature type="cross-link" description="Glycyl lysine isopeptide (Lys-Gly) (interchain with G-Cter in SUMO2); alternate" evidence="2">
    <location>
        <position position="366"/>
    </location>
</feature>
<feature type="cross-link" description="Glycyl lysine isopeptide (Lys-Gly) (interchain with G-Cter in SUMO2)" evidence="2">
    <location>
        <position position="386"/>
    </location>
</feature>
<feature type="cross-link" description="Glycyl lysine isopeptide (Lys-Gly) (interchain with G-Cter in SUMO2)" evidence="2">
    <location>
        <position position="393"/>
    </location>
</feature>
<feature type="cross-link" description="Glycyl lysine isopeptide (Lys-Gly) (interchain with G-Cter in SUMO2)" evidence="2">
    <location>
        <position position="399"/>
    </location>
</feature>
<feature type="sequence conflict" description="In Ref. 2; CAA23176." evidence="4" ref="2">
    <original>G</original>
    <variation>R</variation>
    <location>
        <position position="319"/>
    </location>
</feature>
<reference key="1">
    <citation type="submission" date="2011-09" db="EMBL/GenBank/DDBJ databases">
        <authorList>
            <consortium name="Porcine genome sequencing project"/>
        </authorList>
    </citation>
    <scope>NUCLEOTIDE SEQUENCE [LARGE SCALE GENOMIC DNA]</scope>
</reference>
<reference key="2">
    <citation type="journal article" date="1996" name="Mamm. Genome">
        <title>Evaluation and characterization of a porcine small intestine cDNA library: analysis of 839 clones.</title>
        <authorList>
            <person name="Winteroe A.K."/>
            <person name="Fredholm M."/>
            <person name="Davies W."/>
        </authorList>
    </citation>
    <scope>NUCLEOTIDE SEQUENCE [LARGE SCALE MRNA] OF 205-333</scope>
    <source>
        <tissue>Small intestine</tissue>
    </source>
</reference>
<accession>Q29293</accession>
<accession>A0A4X1VV59</accession>
<comment type="function">
    <text evidence="2">Component of the large ribosomal subunit. The ribosome is a large ribonucleoprotein complex responsible for the synthesis of proteins in the cell.</text>
</comment>
<comment type="subunit">
    <text evidence="2">Component of the large ribosomal subunit. Interacts with DHX33.</text>
</comment>
<comment type="subcellular location">
    <subcellularLocation>
        <location evidence="2">Nucleus</location>
        <location evidence="2">Nucleolus</location>
    </subcellularLocation>
    <subcellularLocation>
        <location evidence="2">Cytoplasm</location>
    </subcellularLocation>
</comment>
<comment type="PTM">
    <text evidence="2">Constitutively monomethylated at His-245 by METTL18. Methylation at His-245 regulates translation elongation by slowing ribosome traversal on tyrosine codons: slower elongation provides enough time for proper folding of synthesized proteins and prevents cellular aggregation of tyrosine-rich proteins It is not required for incorporation of RPL3 into ribosomes.</text>
</comment>
<comment type="similarity">
    <text evidence="4">Belongs to the universal ribosomal protein uL3 family.</text>
</comment>
<proteinExistence type="evidence at transcript level"/>
<dbReference type="EMBL" id="JH115620">
    <property type="status" value="NOT_ANNOTATED_CDS"/>
    <property type="molecule type" value="Genomic_DNA"/>
</dbReference>
<dbReference type="EMBL" id="F14648">
    <property type="protein sequence ID" value="CAA23176.1"/>
    <property type="molecule type" value="mRNA"/>
</dbReference>
<dbReference type="RefSeq" id="NP_001230992.1">
    <property type="nucleotide sequence ID" value="NM_001244063.1"/>
</dbReference>
<dbReference type="SMR" id="Q29293"/>
<dbReference type="FunCoup" id="Q29293">
    <property type="interactions" value="2207"/>
</dbReference>
<dbReference type="STRING" id="9823.ENSSSCP00000051888"/>
<dbReference type="PaxDb" id="9823-ENSSSCP00000000093"/>
<dbReference type="PeptideAtlas" id="Q29293"/>
<dbReference type="Ensembl" id="ENSSSCT00000063010.2">
    <property type="protein sequence ID" value="ENSSSCP00000051888.1"/>
    <property type="gene ID" value="ENSSSCG00000040494.2"/>
</dbReference>
<dbReference type="Ensembl" id="ENSSSCT00015045382.1">
    <property type="protein sequence ID" value="ENSSSCP00015017992.1"/>
    <property type="gene ID" value="ENSSSCG00015033990.1"/>
</dbReference>
<dbReference type="Ensembl" id="ENSSSCT00025007807.1">
    <property type="protein sequence ID" value="ENSSSCP00025003152.1"/>
    <property type="gene ID" value="ENSSSCG00025005840.1"/>
</dbReference>
<dbReference type="Ensembl" id="ENSSSCT00030006628.1">
    <property type="protein sequence ID" value="ENSSSCP00030002919.1"/>
    <property type="gene ID" value="ENSSSCG00030004909.1"/>
</dbReference>
<dbReference type="Ensembl" id="ENSSSCT00035040465.1">
    <property type="protein sequence ID" value="ENSSSCP00035016175.1"/>
    <property type="gene ID" value="ENSSSCG00035030560.1"/>
</dbReference>
<dbReference type="Ensembl" id="ENSSSCT00040070609.1">
    <property type="protein sequence ID" value="ENSSSCP00040030079.1"/>
    <property type="gene ID" value="ENSSSCG00040052167.1"/>
</dbReference>
<dbReference type="Ensembl" id="ENSSSCT00045053070.1">
    <property type="protein sequence ID" value="ENSSSCP00045036916.1"/>
    <property type="gene ID" value="ENSSSCG00045031022.1"/>
</dbReference>
<dbReference type="Ensembl" id="ENSSSCT00050104983.1">
    <property type="protein sequence ID" value="ENSSSCP00050046113.1"/>
    <property type="gene ID" value="ENSSSCG00050076426.1"/>
</dbReference>
<dbReference type="Ensembl" id="ENSSSCT00055023445.1">
    <property type="protein sequence ID" value="ENSSSCP00055018534.1"/>
    <property type="gene ID" value="ENSSSCG00055011918.1"/>
</dbReference>
<dbReference type="Ensembl" id="ENSSSCT00060062901.1">
    <property type="protein sequence ID" value="ENSSSCP00060026976.1"/>
    <property type="gene ID" value="ENSSSCG00060046322.1"/>
</dbReference>
<dbReference type="Ensembl" id="ENSSSCT00060062923.1">
    <property type="protein sequence ID" value="ENSSSCP00060026982.1"/>
    <property type="gene ID" value="ENSSSCG00060046322.1"/>
</dbReference>
<dbReference type="Ensembl" id="ENSSSCT00065023278.1">
    <property type="protein sequence ID" value="ENSSSCP00065009474.1"/>
    <property type="gene ID" value="ENSSSCG00065017514.1"/>
</dbReference>
<dbReference type="Ensembl" id="ENSSSCT00070053710.1">
    <property type="protein sequence ID" value="ENSSSCP00070045533.1"/>
    <property type="gene ID" value="ENSSSCG00070026776.1"/>
</dbReference>
<dbReference type="Ensembl" id="ENSSSCT00085040586">
    <property type="protein sequence ID" value="ENSSSCP00085028425"/>
    <property type="gene ID" value="ENSSSCG00085021250"/>
</dbReference>
<dbReference type="Ensembl" id="ENSSSCT00090019071">
    <property type="protein sequence ID" value="ENSSSCP00090011789"/>
    <property type="gene ID" value="ENSSSCG00090010827"/>
</dbReference>
<dbReference type="Ensembl" id="ENSSSCT00105069809">
    <property type="protein sequence ID" value="ENSSSCP00105049429"/>
    <property type="gene ID" value="ENSSSCG00105036616"/>
</dbReference>
<dbReference type="Ensembl" id="ENSSSCT00110048360">
    <property type="protein sequence ID" value="ENSSSCP00110034031"/>
    <property type="gene ID" value="ENSSSCG00110025005"/>
</dbReference>
<dbReference type="Ensembl" id="ENSSSCT00115028920">
    <property type="protein sequence ID" value="ENSSSCP00115027446"/>
    <property type="gene ID" value="ENSSSCG00115016504"/>
</dbReference>
<dbReference type="Ensembl" id="ENSSSCT00130024001">
    <property type="protein sequence ID" value="ENSSSCP00130016566"/>
    <property type="gene ID" value="ENSSSCG00130012539"/>
</dbReference>
<dbReference type="GeneID" id="396768"/>
<dbReference type="KEGG" id="ssc:396768"/>
<dbReference type="CTD" id="6122"/>
<dbReference type="VGNC" id="VGNC:92427">
    <property type="gene designation" value="RPL3"/>
</dbReference>
<dbReference type="eggNOG" id="KOG0746">
    <property type="taxonomic scope" value="Eukaryota"/>
</dbReference>
<dbReference type="GeneTree" id="ENSGT00390000017606"/>
<dbReference type="InParanoid" id="Q29293"/>
<dbReference type="OMA" id="QRTEYNK"/>
<dbReference type="OrthoDB" id="1611972at2759"/>
<dbReference type="Reactome" id="R-SSC-156827">
    <property type="pathway name" value="L13a-mediated translational silencing of Ceruloplasmin expression"/>
</dbReference>
<dbReference type="Reactome" id="R-SSC-1799339">
    <property type="pathway name" value="SRP-dependent cotranslational protein targeting to membrane"/>
</dbReference>
<dbReference type="Reactome" id="R-SSC-6791226">
    <property type="pathway name" value="Major pathway of rRNA processing in the nucleolus and cytosol"/>
</dbReference>
<dbReference type="Reactome" id="R-SSC-72689">
    <property type="pathway name" value="Formation of a pool of free 40S subunits"/>
</dbReference>
<dbReference type="Reactome" id="R-SSC-72706">
    <property type="pathway name" value="GTP hydrolysis and joining of the 60S ribosomal subunit"/>
</dbReference>
<dbReference type="Reactome" id="R-SSC-975956">
    <property type="pathway name" value="Nonsense Mediated Decay (NMD) independent of the Exon Junction Complex (EJC)"/>
</dbReference>
<dbReference type="Reactome" id="R-SSC-975957">
    <property type="pathway name" value="Nonsense Mediated Decay (NMD) enhanced by the Exon Junction Complex (EJC)"/>
</dbReference>
<dbReference type="Proteomes" id="UP000008227">
    <property type="component" value="Chromosome 5"/>
</dbReference>
<dbReference type="Proteomes" id="UP000314985">
    <property type="component" value="Chromosome 5"/>
</dbReference>
<dbReference type="Proteomes" id="UP000694570">
    <property type="component" value="Unplaced"/>
</dbReference>
<dbReference type="Proteomes" id="UP000694571">
    <property type="component" value="Unplaced"/>
</dbReference>
<dbReference type="Proteomes" id="UP000694720">
    <property type="component" value="Unplaced"/>
</dbReference>
<dbReference type="Proteomes" id="UP000694722">
    <property type="component" value="Unplaced"/>
</dbReference>
<dbReference type="Proteomes" id="UP000694723">
    <property type="component" value="Unplaced"/>
</dbReference>
<dbReference type="Proteomes" id="UP000694724">
    <property type="component" value="Unplaced"/>
</dbReference>
<dbReference type="Proteomes" id="UP000694725">
    <property type="component" value="Unplaced"/>
</dbReference>
<dbReference type="Proteomes" id="UP000694726">
    <property type="component" value="Unplaced"/>
</dbReference>
<dbReference type="Proteomes" id="UP000694727">
    <property type="component" value="Unplaced"/>
</dbReference>
<dbReference type="Proteomes" id="UP000694728">
    <property type="component" value="Unplaced"/>
</dbReference>
<dbReference type="GO" id="GO:0022625">
    <property type="term" value="C:cytosolic large ribosomal subunit"/>
    <property type="evidence" value="ECO:0000318"/>
    <property type="project" value="GO_Central"/>
</dbReference>
<dbReference type="GO" id="GO:0005730">
    <property type="term" value="C:nucleolus"/>
    <property type="evidence" value="ECO:0000250"/>
    <property type="project" value="UniProtKB"/>
</dbReference>
<dbReference type="GO" id="GO:0003723">
    <property type="term" value="F:RNA binding"/>
    <property type="evidence" value="ECO:0000318"/>
    <property type="project" value="GO_Central"/>
</dbReference>
<dbReference type="GO" id="GO:0003735">
    <property type="term" value="F:structural constituent of ribosome"/>
    <property type="evidence" value="ECO:0000318"/>
    <property type="project" value="GO_Central"/>
</dbReference>
<dbReference type="GO" id="GO:0071353">
    <property type="term" value="P:cellular response to interleukin-4"/>
    <property type="evidence" value="ECO:0007669"/>
    <property type="project" value="Ensembl"/>
</dbReference>
<dbReference type="GO" id="GO:0006412">
    <property type="term" value="P:translation"/>
    <property type="evidence" value="ECO:0000318"/>
    <property type="project" value="GO_Central"/>
</dbReference>
<dbReference type="FunFam" id="2.40.30.10:FF:000079">
    <property type="entry name" value="60S ribosomal protein L3"/>
    <property type="match status" value="1"/>
</dbReference>
<dbReference type="FunFam" id="3.30.1430.10:FF:000001">
    <property type="entry name" value="60S ribosomal protein L3"/>
    <property type="match status" value="1"/>
</dbReference>
<dbReference type="FunFam" id="4.10.960.10:FF:000002">
    <property type="entry name" value="60S ribosomal protein L3"/>
    <property type="match status" value="1"/>
</dbReference>
<dbReference type="FunFam" id="4.10.960.10:FF:000004">
    <property type="entry name" value="60S ribosomal protein L3"/>
    <property type="match status" value="1"/>
</dbReference>
<dbReference type="FunFam" id="2.40.30.10:FF:000351">
    <property type="entry name" value="Ribosomal protein L3"/>
    <property type="match status" value="1"/>
</dbReference>
<dbReference type="Gene3D" id="3.30.1430.10">
    <property type="match status" value="1"/>
</dbReference>
<dbReference type="Gene3D" id="4.10.960.10">
    <property type="entry name" value="Ribosomal protein L3, domain 3"/>
    <property type="match status" value="1"/>
</dbReference>
<dbReference type="Gene3D" id="2.40.30.10">
    <property type="entry name" value="Translation factors"/>
    <property type="match status" value="1"/>
</dbReference>
<dbReference type="InterPro" id="IPR045077">
    <property type="entry name" value="L3_arc_euk"/>
</dbReference>
<dbReference type="InterPro" id="IPR044892">
    <property type="entry name" value="Ribosomal_L3_dom_3_arc_sf"/>
</dbReference>
<dbReference type="InterPro" id="IPR000597">
    <property type="entry name" value="Ribosomal_uL3"/>
</dbReference>
<dbReference type="InterPro" id="IPR019926">
    <property type="entry name" value="Ribosomal_uL3_CS"/>
</dbReference>
<dbReference type="InterPro" id="IPR009000">
    <property type="entry name" value="Transl_B-barrel_sf"/>
</dbReference>
<dbReference type="PANTHER" id="PTHR11363">
    <property type="entry name" value="60S RIBOSOMAL PROTEIN L3-RELATED"/>
    <property type="match status" value="1"/>
</dbReference>
<dbReference type="PANTHER" id="PTHR11363:SF4">
    <property type="entry name" value="LARGE RIBOSOMAL SUBUNIT PROTEIN UL3"/>
    <property type="match status" value="1"/>
</dbReference>
<dbReference type="Pfam" id="PF00297">
    <property type="entry name" value="Ribosomal_L3"/>
    <property type="match status" value="1"/>
</dbReference>
<dbReference type="SUPFAM" id="SSF50447">
    <property type="entry name" value="Translation proteins"/>
    <property type="match status" value="1"/>
</dbReference>
<dbReference type="PROSITE" id="PS00474">
    <property type="entry name" value="RIBOSOMAL_L3"/>
    <property type="match status" value="1"/>
</dbReference>
<sequence length="403" mass="46123">MSHRKFSAPRHGSLGFLPRKRSSRHRGKVKSFPKDDSSKPVHLTAFLGYKAGMTHIVREVDRPGSKVNKKEVVEAVTIVETPPMVIVGIVGYVETPRGLRTFKTIFAEHISDECKRRFYKNWHKSKKKAFTKYCKKWQDEDGKKQLERDFSSMKKYCQVIRVIAHTQMRLLPLRQKKAHLMEIQVNGGTVAEKLDWARERLEQQVPVNQVFGQDEMIDVIGVTKGKGYKGVTSRWHTKKLPRKTHRGLRKVACIGAWHPARVAFSVARAGQKGYHHRTEINKKIYKIGQGYLIKDGKLIKNNASTDYDLSDKSINPLGGFVHYGEVTNDFVMLKGCVVGTKKRVLTLRKSLLVQTKRRALEKIDLKFIDTTSKFGHGRFQTVEEKKAFMGPLKKDRIAKEEGA</sequence>
<keyword id="KW-0007">Acetylation</keyword>
<keyword id="KW-0963">Cytoplasm</keyword>
<keyword id="KW-1017">Isopeptide bond</keyword>
<keyword id="KW-0488">Methylation</keyword>
<keyword id="KW-0539">Nucleus</keyword>
<keyword id="KW-0597">Phosphoprotein</keyword>
<keyword id="KW-1185">Reference proteome</keyword>
<keyword id="KW-0687">Ribonucleoprotein</keyword>
<keyword id="KW-0689">Ribosomal protein</keyword>
<keyword id="KW-0832">Ubl conjugation</keyword>